<gene>
    <name type="primary">Ctnna2</name>
    <name type="synonym">Catna2</name>
</gene>
<comment type="function">
    <text evidence="1 4 5 6">May function as a linker between cadherin adhesion receptors and the cytoskeleton to regulate cell-cell adhesion and differentiation in the nervous system (PubMed:12123610, PubMed:15034585). Required for proper regulation of cortical neuronal migration and neurite growth. It acts as a negative regulator of Arp2/3 complex activity and Arp2/3-mediated actin polymerization. It thereby suppresses excessive actin branching which would impair neurite growth and stability (By similarity). Regulates morphological plasticity of synapses and cerebellar and hippocampal lamination during development. Functions in the control of startle modulation (PubMed:12089526).</text>
</comment>
<comment type="subunit">
    <text evidence="1 2">Interacts with CDH1 and CDH2 (By similarity). Interacts with ZNF639; recruits CTNNA2 to the nucleus (By similarity). Interacts with F-actin (By similarity).</text>
</comment>
<comment type="interaction">
    <interactant intactId="EBI-774089">
        <id>Q61301</id>
    </interactant>
    <interactant intactId="EBI-774089">
        <id>Q61301</id>
        <label>Ctnna2</label>
    </interactant>
    <organismsDiffer>false</organismsDiffer>
    <experiments>2</experiments>
</comment>
<comment type="subcellular location">
    <subcellularLocation>
        <location evidence="8">Cell membrane</location>
        <topology evidence="16">Peripheral membrane protein</topology>
        <orientation evidence="16">Cytoplasmic side</orientation>
    </subcellularLocation>
    <subcellularLocation>
        <location evidence="8">Cytoplasm</location>
    </subcellularLocation>
    <subcellularLocation>
        <location evidence="15">Cytoplasm</location>
        <location evidence="15">Cytoskeleton</location>
    </subcellularLocation>
    <subcellularLocation>
        <location evidence="8 9">Cell junction</location>
        <location evidence="8 9">Adherens junction</location>
    </subcellularLocation>
    <subcellularLocation>
        <location evidence="8 9">Cell projection</location>
        <location evidence="8 9">Axon</location>
    </subcellularLocation>
    <subcellularLocation>
        <location evidence="1">Nucleus</location>
    </subcellularLocation>
</comment>
<comment type="alternative products">
    <event type="alternative splicing"/>
    <isoform>
        <id>Q61301-1</id>
        <name>1</name>
        <name>alpha N-catenin II</name>
        <sequence type="displayed"/>
    </isoform>
    <isoform>
        <id>Q61301-2</id>
        <name>2</name>
        <name>alpha N-catenin I</name>
        <sequence type="described" ref="VSP_006734"/>
    </isoform>
    <isoform>
        <id>Q61301-3</id>
        <name>3</name>
        <sequence type="described" ref="VSP_038010 VSP_006734"/>
    </isoform>
</comment>
<comment type="tissue specificity">
    <text evidence="10">Expressed almost exclusively in the nervous system.</text>
</comment>
<comment type="developmental stage">
    <text evidence="4 7 8 10">The ratio of the two isoforms changes during development; isoform 1 is more abundant than isoform 2 in earlier embryonic stages, whereas isoform 2 is predominant in the adult stage. Expressed in the ventricular zone and in neurons of the developing cortical plate (at protein level). Expressed in migrating neurons of the external granule cell layer at 13.5 dpc while expression appears in the Purkinje cell layer at 17.5 dpc (at protein level). Expressed postnatally in Purkinje cells and hippocampus (at protein level).</text>
</comment>
<comment type="disruption phenotype">
    <text evidence="4 5 6 9">Mice generally die within 24 hours after birth. They display altered Purkinje cells migration, unstable synaptic junctions, defective ventricular architecture, impaired axon migration, reduced number of neurons in specific nuclei, and disordered laminar formation.</text>
</comment>
<comment type="miscellaneous">
    <text>The cdf (cerebellar deficient folia) mice are viable but are ataxic and have cerebellar hypoplasia associated with abnormal lobulation of the cerebellum. They also display defects in Purkinje cells positioning and in packing density and lamination. Fear conditioning and prepulse inhibition of the startle response are altered in cdf mice. Those phenotypes are associated with alteration of the Ctnna2 gene which results in the C-terminal truncation of the protein and are rescued by expression of a Ctnna2 transgene (isoform 2).</text>
</comment>
<comment type="similarity">
    <text evidence="14">Belongs to the vinculin/alpha-catenin family.</text>
</comment>
<accession>Q61301</accession>
<accession>Q3TY37</accession>
<accession>Q61300</accession>
<accession>Q6AXD1</accession>
<dbReference type="EMBL" id="D25282">
    <property type="protein sequence ID" value="BAA04970.1"/>
    <property type="molecule type" value="mRNA"/>
</dbReference>
<dbReference type="EMBL" id="D25281">
    <property type="protein sequence ID" value="BAA04969.1"/>
    <property type="molecule type" value="mRNA"/>
</dbReference>
<dbReference type="EMBL" id="AK158916">
    <property type="protein sequence ID" value="BAE34726.1"/>
    <property type="molecule type" value="mRNA"/>
</dbReference>
<dbReference type="EMBL" id="BC079648">
    <property type="protein sequence ID" value="AAH79648.1"/>
    <property type="molecule type" value="mRNA"/>
</dbReference>
<dbReference type="CCDS" id="CCDS20250.1">
    <molecule id="Q61301-1"/>
</dbReference>
<dbReference type="CCDS" id="CCDS39521.1">
    <molecule id="Q61301-2"/>
</dbReference>
<dbReference type="PIR" id="I49499">
    <property type="entry name" value="I49499"/>
</dbReference>
<dbReference type="PIR" id="I49500">
    <property type="entry name" value="I49500"/>
</dbReference>
<dbReference type="RefSeq" id="NP_001103234.1">
    <molecule id="Q61301-1"/>
    <property type="nucleotide sequence ID" value="NM_001109764.1"/>
</dbReference>
<dbReference type="RefSeq" id="NP_001342122.1">
    <molecule id="Q61301-2"/>
    <property type="nucleotide sequence ID" value="NM_001355193.1"/>
</dbReference>
<dbReference type="RefSeq" id="NP_033949.2">
    <molecule id="Q61301-1"/>
    <property type="nucleotide sequence ID" value="NM_009819.2"/>
</dbReference>
<dbReference type="RefSeq" id="NP_663785.2">
    <molecule id="Q61301-2"/>
    <property type="nucleotide sequence ID" value="NM_145732.2"/>
</dbReference>
<dbReference type="RefSeq" id="XP_011239496.1">
    <property type="nucleotide sequence ID" value="XM_011241194.2"/>
</dbReference>
<dbReference type="RefSeq" id="XP_017176861.1">
    <property type="nucleotide sequence ID" value="XM_017321372.1"/>
</dbReference>
<dbReference type="PDB" id="4K1O">
    <property type="method" value="X-ray"/>
    <property type="resolution" value="2.60 A"/>
    <property type="chains" value="A=651-953"/>
</dbReference>
<dbReference type="PDB" id="4ONS">
    <property type="method" value="X-ray"/>
    <property type="resolution" value="2.80 A"/>
    <property type="chains" value="A/C=18-264"/>
</dbReference>
<dbReference type="PDB" id="4P9T">
    <property type="method" value="X-ray"/>
    <property type="resolution" value="2.50 A"/>
    <property type="chains" value="A/B/C/D=13-261"/>
</dbReference>
<dbReference type="PDB" id="5XFL">
    <property type="method" value="X-ray"/>
    <property type="resolution" value="2.45 A"/>
    <property type="chains" value="A/B/C/D=260-632"/>
</dbReference>
<dbReference type="PDB" id="6DUY">
    <property type="method" value="X-ray"/>
    <property type="resolution" value="2.81 A"/>
    <property type="chains" value="A/B=651-953"/>
</dbReference>
<dbReference type="PDBsum" id="4K1O"/>
<dbReference type="PDBsum" id="4ONS"/>
<dbReference type="PDBsum" id="4P9T"/>
<dbReference type="PDBsum" id="5XFL"/>
<dbReference type="PDBsum" id="6DUY"/>
<dbReference type="SMR" id="Q61301"/>
<dbReference type="BioGRID" id="198511">
    <property type="interactions" value="15"/>
</dbReference>
<dbReference type="DIP" id="DIP-31971N"/>
<dbReference type="FunCoup" id="Q61301">
    <property type="interactions" value="778"/>
</dbReference>
<dbReference type="IntAct" id="Q61301">
    <property type="interactions" value="6"/>
</dbReference>
<dbReference type="MINT" id="Q61301"/>
<dbReference type="STRING" id="10090.ENSMUSP00000124376"/>
<dbReference type="GlyGen" id="Q61301">
    <property type="glycosylation" value="2 sites, 1 N-linked glycan (1 site), 1 O-linked glycan (1 site)"/>
</dbReference>
<dbReference type="iPTMnet" id="Q61301"/>
<dbReference type="PhosphoSitePlus" id="Q61301"/>
<dbReference type="SwissPalm" id="Q61301"/>
<dbReference type="jPOST" id="Q61301"/>
<dbReference type="PaxDb" id="10090-ENSMUSP00000124376"/>
<dbReference type="PeptideAtlas" id="Q61301"/>
<dbReference type="ProteomicsDB" id="277922">
    <molecule id="Q61301-1"/>
</dbReference>
<dbReference type="ProteomicsDB" id="277923">
    <molecule id="Q61301-2"/>
</dbReference>
<dbReference type="ProteomicsDB" id="277924">
    <molecule id="Q61301-3"/>
</dbReference>
<dbReference type="Pumba" id="Q61301"/>
<dbReference type="Antibodypedia" id="8335">
    <property type="antibodies" value="143 antibodies from 28 providers"/>
</dbReference>
<dbReference type="DNASU" id="12386"/>
<dbReference type="Ensembl" id="ENSMUST00000075340.12">
    <molecule id="Q61301-2"/>
    <property type="protein sequence ID" value="ENSMUSP00000074809.6"/>
    <property type="gene ID" value="ENSMUSG00000063063.13"/>
</dbReference>
<dbReference type="Ensembl" id="ENSMUST00000159626.8">
    <molecule id="Q61301-1"/>
    <property type="protein sequence ID" value="ENSMUSP00000124376.2"/>
    <property type="gene ID" value="ENSMUSG00000063063.13"/>
</dbReference>
<dbReference type="Ensembl" id="ENSMUST00000161846.8">
    <molecule id="Q61301-3"/>
    <property type="protein sequence ID" value="ENSMUSP00000123714.2"/>
    <property type="gene ID" value="ENSMUSG00000063063.13"/>
</dbReference>
<dbReference type="GeneID" id="12386"/>
<dbReference type="KEGG" id="mmu:12386"/>
<dbReference type="UCSC" id="uc009cjq.2">
    <molecule id="Q61301-1"/>
    <property type="organism name" value="mouse"/>
</dbReference>
<dbReference type="UCSC" id="uc012enl.1">
    <molecule id="Q61301-2"/>
    <property type="organism name" value="mouse"/>
</dbReference>
<dbReference type="AGR" id="MGI:88275"/>
<dbReference type="CTD" id="1496"/>
<dbReference type="MGI" id="MGI:88275">
    <property type="gene designation" value="Ctnna2"/>
</dbReference>
<dbReference type="VEuPathDB" id="HostDB:ENSMUSG00000063063"/>
<dbReference type="eggNOG" id="KOG3681">
    <property type="taxonomic scope" value="Eukaryota"/>
</dbReference>
<dbReference type="GeneTree" id="ENSGT01030000234543"/>
<dbReference type="HOGENOM" id="CLU_015314_2_0_1"/>
<dbReference type="InParanoid" id="Q61301"/>
<dbReference type="OrthoDB" id="45975at9989"/>
<dbReference type="PhylomeDB" id="Q61301"/>
<dbReference type="TreeFam" id="TF313686"/>
<dbReference type="Reactome" id="R-MMU-525793">
    <property type="pathway name" value="Myogenesis"/>
</dbReference>
<dbReference type="BioGRID-ORCS" id="12386">
    <property type="hits" value="0 hits in 76 CRISPR screens"/>
</dbReference>
<dbReference type="CD-CODE" id="CE726F99">
    <property type="entry name" value="Postsynaptic density"/>
</dbReference>
<dbReference type="ChiTaRS" id="Ctnna2">
    <property type="organism name" value="mouse"/>
</dbReference>
<dbReference type="EvolutionaryTrace" id="Q61301"/>
<dbReference type="PRO" id="PR:Q61301"/>
<dbReference type="Proteomes" id="UP000000589">
    <property type="component" value="Chromosome 6"/>
</dbReference>
<dbReference type="RNAct" id="Q61301">
    <property type="molecule type" value="protein"/>
</dbReference>
<dbReference type="Bgee" id="ENSMUSG00000063063">
    <property type="expression patterns" value="Expressed in cortical plate and 121 other cell types or tissues"/>
</dbReference>
<dbReference type="ExpressionAtlas" id="Q61301">
    <property type="expression patterns" value="baseline and differential"/>
</dbReference>
<dbReference type="GO" id="GO:0015629">
    <property type="term" value="C:actin cytoskeleton"/>
    <property type="evidence" value="ECO:0007669"/>
    <property type="project" value="InterPro"/>
</dbReference>
<dbReference type="GO" id="GO:0005912">
    <property type="term" value="C:adherens junction"/>
    <property type="evidence" value="ECO:0000314"/>
    <property type="project" value="UniProtKB"/>
</dbReference>
<dbReference type="GO" id="GO:0030424">
    <property type="term" value="C:axon"/>
    <property type="evidence" value="ECO:0000315"/>
    <property type="project" value="UniProtKB"/>
</dbReference>
<dbReference type="GO" id="GO:0016323">
    <property type="term" value="C:basolateral plasma membrane"/>
    <property type="evidence" value="ECO:0000314"/>
    <property type="project" value="MGI"/>
</dbReference>
<dbReference type="GO" id="GO:0005737">
    <property type="term" value="C:cytoplasm"/>
    <property type="evidence" value="ECO:0000250"/>
    <property type="project" value="UniProtKB"/>
</dbReference>
<dbReference type="GO" id="GO:0098890">
    <property type="term" value="C:extrinsic component of postsynaptic membrane"/>
    <property type="evidence" value="ECO:0000314"/>
    <property type="project" value="SynGO"/>
</dbReference>
<dbReference type="GO" id="GO:0098888">
    <property type="term" value="C:extrinsic component of presynaptic membrane"/>
    <property type="evidence" value="ECO:0000314"/>
    <property type="project" value="SynGO"/>
</dbReference>
<dbReference type="GO" id="GO:0098686">
    <property type="term" value="C:hippocampal mossy fiber to CA3 synapse"/>
    <property type="evidence" value="ECO:0000314"/>
    <property type="project" value="SynGO"/>
</dbReference>
<dbReference type="GO" id="GO:0030027">
    <property type="term" value="C:lamellipodium"/>
    <property type="evidence" value="ECO:0000314"/>
    <property type="project" value="MGI"/>
</dbReference>
<dbReference type="GO" id="GO:0005634">
    <property type="term" value="C:nucleus"/>
    <property type="evidence" value="ECO:0007669"/>
    <property type="project" value="UniProtKB-SubCell"/>
</dbReference>
<dbReference type="GO" id="GO:0098688">
    <property type="term" value="C:parallel fiber to Purkinje cell synapse"/>
    <property type="evidence" value="ECO:0000314"/>
    <property type="project" value="SynGO"/>
</dbReference>
<dbReference type="GO" id="GO:0014069">
    <property type="term" value="C:postsynaptic density"/>
    <property type="evidence" value="ECO:0000314"/>
    <property type="project" value="MGI"/>
</dbReference>
<dbReference type="GO" id="GO:0099092">
    <property type="term" value="C:postsynaptic density, intracellular component"/>
    <property type="evidence" value="ECO:0000314"/>
    <property type="project" value="SynGO"/>
</dbReference>
<dbReference type="GO" id="GO:0098831">
    <property type="term" value="C:presynaptic active zone cytoplasmic component"/>
    <property type="evidence" value="ECO:0000314"/>
    <property type="project" value="SynGO"/>
</dbReference>
<dbReference type="GO" id="GO:0051015">
    <property type="term" value="F:actin filament binding"/>
    <property type="evidence" value="ECO:0000250"/>
    <property type="project" value="UniProtKB"/>
</dbReference>
<dbReference type="GO" id="GO:0045296">
    <property type="term" value="F:cadherin binding"/>
    <property type="evidence" value="ECO:0007669"/>
    <property type="project" value="InterPro"/>
</dbReference>
<dbReference type="GO" id="GO:0042802">
    <property type="term" value="F:identical protein binding"/>
    <property type="evidence" value="ECO:0000353"/>
    <property type="project" value="IntAct"/>
</dbReference>
<dbReference type="GO" id="GO:0005198">
    <property type="term" value="F:structural molecule activity"/>
    <property type="evidence" value="ECO:0007669"/>
    <property type="project" value="InterPro"/>
</dbReference>
<dbReference type="GO" id="GO:0007409">
    <property type="term" value="P:axonogenesis"/>
    <property type="evidence" value="ECO:0000315"/>
    <property type="project" value="UniProtKB"/>
</dbReference>
<dbReference type="GO" id="GO:0048854">
    <property type="term" value="P:brain morphogenesis"/>
    <property type="evidence" value="ECO:0000315"/>
    <property type="project" value="UniProtKB"/>
</dbReference>
<dbReference type="GO" id="GO:0098609">
    <property type="term" value="P:cell-cell adhesion"/>
    <property type="evidence" value="ECO:0000250"/>
    <property type="project" value="UniProtKB"/>
</dbReference>
<dbReference type="GO" id="GO:0048813">
    <property type="term" value="P:dendrite morphogenesis"/>
    <property type="evidence" value="ECO:0000315"/>
    <property type="project" value="UniProtKB"/>
</dbReference>
<dbReference type="GO" id="GO:0098885">
    <property type="term" value="P:modification of postsynaptic actin cytoskeleton"/>
    <property type="evidence" value="ECO:0000314"/>
    <property type="project" value="SynGO"/>
</dbReference>
<dbReference type="GO" id="GO:0034316">
    <property type="term" value="P:negative regulation of Arp2/3 complex-mediated actin nucleation"/>
    <property type="evidence" value="ECO:0000250"/>
    <property type="project" value="UniProtKB"/>
</dbReference>
<dbReference type="GO" id="GO:0060134">
    <property type="term" value="P:prepulse inhibition"/>
    <property type="evidence" value="ECO:0000315"/>
    <property type="project" value="UniProtKB"/>
</dbReference>
<dbReference type="GO" id="GO:0021942">
    <property type="term" value="P:radial glia guided migration of Purkinje cell"/>
    <property type="evidence" value="ECO:0000315"/>
    <property type="project" value="UniProtKB"/>
</dbReference>
<dbReference type="GO" id="GO:2001222">
    <property type="term" value="P:regulation of neuron migration"/>
    <property type="evidence" value="ECO:0000250"/>
    <property type="project" value="UniProtKB"/>
</dbReference>
<dbReference type="GO" id="GO:0010975">
    <property type="term" value="P:regulation of neuron projection development"/>
    <property type="evidence" value="ECO:0000250"/>
    <property type="project" value="UniProtKB"/>
</dbReference>
<dbReference type="GO" id="GO:0051823">
    <property type="term" value="P:regulation of synapse structural plasticity"/>
    <property type="evidence" value="ECO:0000315"/>
    <property type="project" value="UniProtKB"/>
</dbReference>
<dbReference type="FunFam" id="1.20.120.230:FF:000006">
    <property type="entry name" value="Catenin alpha 1"/>
    <property type="match status" value="1"/>
</dbReference>
<dbReference type="FunFam" id="1.20.120.230:FF:000007">
    <property type="entry name" value="Catenin alpha 1"/>
    <property type="match status" value="1"/>
</dbReference>
<dbReference type="FunFam" id="1.20.120.230:FF:000008">
    <property type="entry name" value="Catenin alpha 1"/>
    <property type="match status" value="1"/>
</dbReference>
<dbReference type="FunFam" id="1.20.120.230:FF:000011">
    <property type="entry name" value="Catenin alpha 1"/>
    <property type="match status" value="1"/>
</dbReference>
<dbReference type="Gene3D" id="6.10.250.2510">
    <property type="match status" value="1"/>
</dbReference>
<dbReference type="Gene3D" id="1.20.120.230">
    <property type="entry name" value="Alpha-catenin/vinculin-like"/>
    <property type="match status" value="5"/>
</dbReference>
<dbReference type="InterPro" id="IPR036723">
    <property type="entry name" value="Alpha-catenin/vinculin-like_sf"/>
</dbReference>
<dbReference type="InterPro" id="IPR001033">
    <property type="entry name" value="Alpha_catenin"/>
</dbReference>
<dbReference type="InterPro" id="IPR006077">
    <property type="entry name" value="Vinculin/catenin"/>
</dbReference>
<dbReference type="InterPro" id="IPR000633">
    <property type="entry name" value="Vinculin_CS"/>
</dbReference>
<dbReference type="PANTHER" id="PTHR18914">
    <property type="entry name" value="ALPHA CATENIN"/>
    <property type="match status" value="1"/>
</dbReference>
<dbReference type="PANTHER" id="PTHR18914:SF23">
    <property type="entry name" value="CATENIN ALPHA-2"/>
    <property type="match status" value="1"/>
</dbReference>
<dbReference type="Pfam" id="PF01044">
    <property type="entry name" value="Vinculin"/>
    <property type="match status" value="2"/>
</dbReference>
<dbReference type="PRINTS" id="PR00805">
    <property type="entry name" value="ALPHACATENIN"/>
</dbReference>
<dbReference type="SUPFAM" id="SSF47220">
    <property type="entry name" value="alpha-catenin/vinculin-like"/>
    <property type="match status" value="4"/>
</dbReference>
<dbReference type="PROSITE" id="PS00663">
    <property type="entry name" value="VINCULIN_1"/>
    <property type="match status" value="1"/>
</dbReference>
<organism>
    <name type="scientific">Mus musculus</name>
    <name type="common">Mouse</name>
    <dbReference type="NCBI Taxonomy" id="10090"/>
    <lineage>
        <taxon>Eukaryota</taxon>
        <taxon>Metazoa</taxon>
        <taxon>Chordata</taxon>
        <taxon>Craniata</taxon>
        <taxon>Vertebrata</taxon>
        <taxon>Euteleostomi</taxon>
        <taxon>Mammalia</taxon>
        <taxon>Eutheria</taxon>
        <taxon>Euarchontoglires</taxon>
        <taxon>Glires</taxon>
        <taxon>Rodentia</taxon>
        <taxon>Myomorpha</taxon>
        <taxon>Muroidea</taxon>
        <taxon>Muridae</taxon>
        <taxon>Murinae</taxon>
        <taxon>Mus</taxon>
        <taxon>Mus</taxon>
    </lineage>
</organism>
<reference key="1">
    <citation type="journal article" date="1994" name="Dev. Biol.">
        <title>Mouse alpha N-catenin: two isoforms, specific expression in the nervous system, and chromosomal localization of the gene.</title>
        <authorList>
            <person name="Uchida N."/>
            <person name="Shimamura K."/>
            <person name="Miyatani S."/>
            <person name="Copeland N.G."/>
            <person name="Gilbert D.J."/>
            <person name="Jenkins N.A."/>
            <person name="Takeichi M."/>
        </authorList>
    </citation>
    <scope>NUCLEOTIDE SEQUENCE [MRNA] (ISOFORMS 1 AND 2)</scope>
    <scope>TISSUE SPECIFICITY</scope>
    <scope>DEVELOPMENTAL STAGE</scope>
</reference>
<reference key="2">
    <citation type="journal article" date="2005" name="Science">
        <title>The transcriptional landscape of the mammalian genome.</title>
        <authorList>
            <person name="Carninci P."/>
            <person name="Kasukawa T."/>
            <person name="Katayama S."/>
            <person name="Gough J."/>
            <person name="Frith M.C."/>
            <person name="Maeda N."/>
            <person name="Oyama R."/>
            <person name="Ravasi T."/>
            <person name="Lenhard B."/>
            <person name="Wells C."/>
            <person name="Kodzius R."/>
            <person name="Shimokawa K."/>
            <person name="Bajic V.B."/>
            <person name="Brenner S.E."/>
            <person name="Batalov S."/>
            <person name="Forrest A.R."/>
            <person name="Zavolan M."/>
            <person name="Davis M.J."/>
            <person name="Wilming L.G."/>
            <person name="Aidinis V."/>
            <person name="Allen J.E."/>
            <person name="Ambesi-Impiombato A."/>
            <person name="Apweiler R."/>
            <person name="Aturaliya R.N."/>
            <person name="Bailey T.L."/>
            <person name="Bansal M."/>
            <person name="Baxter L."/>
            <person name="Beisel K.W."/>
            <person name="Bersano T."/>
            <person name="Bono H."/>
            <person name="Chalk A.M."/>
            <person name="Chiu K.P."/>
            <person name="Choudhary V."/>
            <person name="Christoffels A."/>
            <person name="Clutterbuck D.R."/>
            <person name="Crowe M.L."/>
            <person name="Dalla E."/>
            <person name="Dalrymple B.P."/>
            <person name="de Bono B."/>
            <person name="Della Gatta G."/>
            <person name="di Bernardo D."/>
            <person name="Down T."/>
            <person name="Engstrom P."/>
            <person name="Fagiolini M."/>
            <person name="Faulkner G."/>
            <person name="Fletcher C.F."/>
            <person name="Fukushima T."/>
            <person name="Furuno M."/>
            <person name="Futaki S."/>
            <person name="Gariboldi M."/>
            <person name="Georgii-Hemming P."/>
            <person name="Gingeras T.R."/>
            <person name="Gojobori T."/>
            <person name="Green R.E."/>
            <person name="Gustincich S."/>
            <person name="Harbers M."/>
            <person name="Hayashi Y."/>
            <person name="Hensch T.K."/>
            <person name="Hirokawa N."/>
            <person name="Hill D."/>
            <person name="Huminiecki L."/>
            <person name="Iacono M."/>
            <person name="Ikeo K."/>
            <person name="Iwama A."/>
            <person name="Ishikawa T."/>
            <person name="Jakt M."/>
            <person name="Kanapin A."/>
            <person name="Katoh M."/>
            <person name="Kawasawa Y."/>
            <person name="Kelso J."/>
            <person name="Kitamura H."/>
            <person name="Kitano H."/>
            <person name="Kollias G."/>
            <person name="Krishnan S.P."/>
            <person name="Kruger A."/>
            <person name="Kummerfeld S.K."/>
            <person name="Kurochkin I.V."/>
            <person name="Lareau L.F."/>
            <person name="Lazarevic D."/>
            <person name="Lipovich L."/>
            <person name="Liu J."/>
            <person name="Liuni S."/>
            <person name="McWilliam S."/>
            <person name="Madan Babu M."/>
            <person name="Madera M."/>
            <person name="Marchionni L."/>
            <person name="Matsuda H."/>
            <person name="Matsuzawa S."/>
            <person name="Miki H."/>
            <person name="Mignone F."/>
            <person name="Miyake S."/>
            <person name="Morris K."/>
            <person name="Mottagui-Tabar S."/>
            <person name="Mulder N."/>
            <person name="Nakano N."/>
            <person name="Nakauchi H."/>
            <person name="Ng P."/>
            <person name="Nilsson R."/>
            <person name="Nishiguchi S."/>
            <person name="Nishikawa S."/>
            <person name="Nori F."/>
            <person name="Ohara O."/>
            <person name="Okazaki Y."/>
            <person name="Orlando V."/>
            <person name="Pang K.C."/>
            <person name="Pavan W.J."/>
            <person name="Pavesi G."/>
            <person name="Pesole G."/>
            <person name="Petrovsky N."/>
            <person name="Piazza S."/>
            <person name="Reed J."/>
            <person name="Reid J.F."/>
            <person name="Ring B.Z."/>
            <person name="Ringwald M."/>
            <person name="Rost B."/>
            <person name="Ruan Y."/>
            <person name="Salzberg S.L."/>
            <person name="Sandelin A."/>
            <person name="Schneider C."/>
            <person name="Schoenbach C."/>
            <person name="Sekiguchi K."/>
            <person name="Semple C.A."/>
            <person name="Seno S."/>
            <person name="Sessa L."/>
            <person name="Sheng Y."/>
            <person name="Shibata Y."/>
            <person name="Shimada H."/>
            <person name="Shimada K."/>
            <person name="Silva D."/>
            <person name="Sinclair B."/>
            <person name="Sperling S."/>
            <person name="Stupka E."/>
            <person name="Sugiura K."/>
            <person name="Sultana R."/>
            <person name="Takenaka Y."/>
            <person name="Taki K."/>
            <person name="Tammoja K."/>
            <person name="Tan S.L."/>
            <person name="Tang S."/>
            <person name="Taylor M.S."/>
            <person name="Tegner J."/>
            <person name="Teichmann S.A."/>
            <person name="Ueda H.R."/>
            <person name="van Nimwegen E."/>
            <person name="Verardo R."/>
            <person name="Wei C.L."/>
            <person name="Yagi K."/>
            <person name="Yamanishi H."/>
            <person name="Zabarovsky E."/>
            <person name="Zhu S."/>
            <person name="Zimmer A."/>
            <person name="Hide W."/>
            <person name="Bult C."/>
            <person name="Grimmond S.M."/>
            <person name="Teasdale R.D."/>
            <person name="Liu E.T."/>
            <person name="Brusic V."/>
            <person name="Quackenbush J."/>
            <person name="Wahlestedt C."/>
            <person name="Mattick J.S."/>
            <person name="Hume D.A."/>
            <person name="Kai C."/>
            <person name="Sasaki D."/>
            <person name="Tomaru Y."/>
            <person name="Fukuda S."/>
            <person name="Kanamori-Katayama M."/>
            <person name="Suzuki M."/>
            <person name="Aoki J."/>
            <person name="Arakawa T."/>
            <person name="Iida J."/>
            <person name="Imamura K."/>
            <person name="Itoh M."/>
            <person name="Kato T."/>
            <person name="Kawaji H."/>
            <person name="Kawagashira N."/>
            <person name="Kawashima T."/>
            <person name="Kojima M."/>
            <person name="Kondo S."/>
            <person name="Konno H."/>
            <person name="Nakano K."/>
            <person name="Ninomiya N."/>
            <person name="Nishio T."/>
            <person name="Okada M."/>
            <person name="Plessy C."/>
            <person name="Shibata K."/>
            <person name="Shiraki T."/>
            <person name="Suzuki S."/>
            <person name="Tagami M."/>
            <person name="Waki K."/>
            <person name="Watahiki A."/>
            <person name="Okamura-Oho Y."/>
            <person name="Suzuki H."/>
            <person name="Kawai J."/>
            <person name="Hayashizaki Y."/>
        </authorList>
    </citation>
    <scope>NUCLEOTIDE SEQUENCE [LARGE SCALE MRNA] (ISOFORM 3)</scope>
    <source>
        <strain>C57BL/6J</strain>
        <tissue>Visual cortex</tissue>
    </source>
</reference>
<reference key="3">
    <citation type="journal article" date="2004" name="Genome Res.">
        <title>The status, quality, and expansion of the NIH full-length cDNA project: the Mammalian Gene Collection (MGC).</title>
        <authorList>
            <consortium name="The MGC Project Team"/>
        </authorList>
    </citation>
    <scope>NUCLEOTIDE SEQUENCE [LARGE SCALE MRNA] (ISOFORM 2)</scope>
    <source>
        <strain>C57BL/6J</strain>
        <tissue>Brain</tissue>
    </source>
</reference>
<reference key="4">
    <citation type="journal article" date="2002" name="Nat. Genet.">
        <title>Deletion in Catna2, encoding alpha N-catenin, causes cerebellar and hippocampal lamination defects and impaired startle modulation.</title>
        <authorList>
            <person name="Park C."/>
            <person name="Falls W."/>
            <person name="Finger J.H."/>
            <person name="Longo-Guess C.M."/>
            <person name="Ackerman S.L."/>
        </authorList>
    </citation>
    <scope>DISRUPTION PHENOTYPE</scope>
    <scope>FUNCTION</scope>
    <scope>DEVELOPMENTAL STAGE</scope>
</reference>
<reference key="5">
    <citation type="journal article" date="2002" name="Neuron">
        <title>Cadherin regulates dendritic spine morphogenesis.</title>
        <authorList>
            <person name="Togashi H."/>
            <person name="Abe K."/>
            <person name="Mizoguchi A."/>
            <person name="Takaoka K."/>
            <person name="Chisaka O."/>
            <person name="Takeichi M."/>
        </authorList>
    </citation>
    <scope>DISRUPTION PHENOTYPE</scope>
    <scope>FUNCTION</scope>
</reference>
<reference key="6">
    <citation type="journal article" date="2004" name="Mol. Cell. Proteomics">
        <title>Phosphoproteomic analysis of the developing mouse brain.</title>
        <authorList>
            <person name="Ballif B.A."/>
            <person name="Villen J."/>
            <person name="Beausoleil S.A."/>
            <person name="Schwartz D."/>
            <person name="Gygi S.P."/>
        </authorList>
    </citation>
    <scope>PHOSPHORYLATION [LARGE SCALE ANALYSIS] AT SER-640 AND SER-901</scope>
    <scope>IDENTIFICATION BY MASS SPECTROMETRY [LARGE SCALE ANALYSIS]</scope>
    <source>
        <tissue>Embryonic brain</tissue>
    </source>
</reference>
<reference key="7">
    <citation type="journal article" date="2004" name="Nat. Neurosci.">
        <title>Stability of dendritic spines and synaptic contacts is controlled by alpha N-catenin.</title>
        <authorList>
            <person name="Abe K."/>
            <person name="Chisaka O."/>
            <person name="Van Roy F."/>
            <person name="Takeichi M."/>
        </authorList>
    </citation>
    <scope>DISRUPTION PHENOTYPE</scope>
    <scope>FUNCTION</scope>
    <scope>SUBCELLULAR LOCATION</scope>
</reference>
<reference key="8">
    <citation type="journal article" date="2005" name="Brain Res. Dev. Brain Res.">
        <title>Switching of alpha-catenin from alphaE-catenin in the cortical ventricular zone to alphaN-catenin II in the intermediate zone.</title>
        <authorList>
            <person name="Ajioka I."/>
            <person name="Nakajima K."/>
        </authorList>
    </citation>
    <scope>DEVELOPMENTAL STAGE</scope>
</reference>
<reference key="9">
    <citation type="journal article" date="2006" name="Brain Res.">
        <title>Differential expression of alpha-E-catenin and alpha-N-catenin in the developing cerebral cortex.</title>
        <authorList>
            <person name="Stocker A.M."/>
            <person name="Chenn A."/>
        </authorList>
    </citation>
    <scope>DEVELOPMENTAL STAGE</scope>
    <scope>SUBCELLULAR LOCATION</scope>
</reference>
<reference key="10">
    <citation type="journal article" date="2006" name="Dev. Dyn.">
        <title>Alpha N-catenin deficiency causes defects in axon migration and nuclear organization in restricted regions of the mouse brain.</title>
        <authorList>
            <person name="Uemura M."/>
            <person name="Takeichi M."/>
        </authorList>
    </citation>
    <scope>DISRUPTION PHENOTYPE</scope>
    <scope>SUBCELLULAR LOCATION</scope>
</reference>
<reference key="11">
    <citation type="journal article" date="2006" name="Mol. Cell. Proteomics">
        <title>Comprehensive identification of phosphorylation sites in postsynaptic density preparations.</title>
        <authorList>
            <person name="Trinidad J.C."/>
            <person name="Specht C.G."/>
            <person name="Thalhammer A."/>
            <person name="Schoepfer R."/>
            <person name="Burlingame A.L."/>
        </authorList>
    </citation>
    <scope>PHOSPHORYLATION [LARGE SCALE ANALYSIS] AT SER-640</scope>
    <scope>IDENTIFICATION BY MASS SPECTROMETRY [LARGE SCALE ANALYSIS]</scope>
    <source>
        <tissue>Brain</tissue>
    </source>
</reference>
<reference key="12">
    <citation type="journal article" date="2007" name="Mol. Cell. Proteomics">
        <title>Qualitative and quantitative analyses of protein phosphorylation in naive and stimulated mouse synaptosomal preparations.</title>
        <authorList>
            <person name="Munton R.P."/>
            <person name="Tweedie-Cullen R."/>
            <person name="Livingstone-Zatchej M."/>
            <person name="Weinandy F."/>
            <person name="Waidelich M."/>
            <person name="Longo D."/>
            <person name="Gehrig P."/>
            <person name="Potthast F."/>
            <person name="Rutishauser D."/>
            <person name="Gerrits B."/>
            <person name="Panse C."/>
            <person name="Schlapbach R."/>
            <person name="Mansuy I.M."/>
        </authorList>
    </citation>
    <scope>IDENTIFICATION BY MASS SPECTROMETRY [LARGE SCALE ANALYSIS]</scope>
    <source>
        <tissue>Brain cortex</tissue>
    </source>
</reference>
<reference key="13">
    <citation type="journal article" date="2010" name="Cell">
        <title>A tissue-specific atlas of mouse protein phosphorylation and expression.</title>
        <authorList>
            <person name="Huttlin E.L."/>
            <person name="Jedrychowski M.P."/>
            <person name="Elias J.E."/>
            <person name="Goswami T."/>
            <person name="Rad R."/>
            <person name="Beausoleil S.A."/>
            <person name="Villen J."/>
            <person name="Haas W."/>
            <person name="Sowa M.E."/>
            <person name="Gygi S.P."/>
        </authorList>
    </citation>
    <scope>PHOSPHORYLATION [LARGE SCALE ANALYSIS] AT THR-632; SER-640; SER-651; SER-901 AND SER-939</scope>
    <scope>IDENTIFICATION BY MASS SPECTROMETRY [LARGE SCALE ANALYSIS]</scope>
    <source>
        <tissue>Brain</tissue>
        <tissue>Testis</tissue>
    </source>
</reference>
<keyword id="KW-0002">3D-structure</keyword>
<keyword id="KW-0025">Alternative splicing</keyword>
<keyword id="KW-0130">Cell adhesion</keyword>
<keyword id="KW-0965">Cell junction</keyword>
<keyword id="KW-1003">Cell membrane</keyword>
<keyword id="KW-0966">Cell projection</keyword>
<keyword id="KW-0963">Cytoplasm</keyword>
<keyword id="KW-0206">Cytoskeleton</keyword>
<keyword id="KW-0217">Developmental protein</keyword>
<keyword id="KW-0221">Differentiation</keyword>
<keyword id="KW-0472">Membrane</keyword>
<keyword id="KW-0539">Nucleus</keyword>
<keyword id="KW-0597">Phosphoprotein</keyword>
<keyword id="KW-1185">Reference proteome</keyword>
<feature type="chain" id="PRO_0000064264" description="Catenin alpha-2">
    <location>
        <begin position="1"/>
        <end position="953"/>
    </location>
</feature>
<feature type="region of interest" description="Disordered" evidence="3">
    <location>
        <begin position="912"/>
        <end position="939"/>
    </location>
</feature>
<feature type="compositionally biased region" description="Basic and acidic residues" evidence="3">
    <location>
        <begin position="912"/>
        <end position="927"/>
    </location>
</feature>
<feature type="compositionally biased region" description="Basic residues" evidence="3">
    <location>
        <begin position="928"/>
        <end position="938"/>
    </location>
</feature>
<feature type="modified residue" description="Phosphothreonine" evidence="19">
    <location>
        <position position="632"/>
    </location>
</feature>
<feature type="modified residue" description="Phosphoserine" evidence="17 18 19">
    <location>
        <position position="640"/>
    </location>
</feature>
<feature type="modified residue" description="Phosphoserine" evidence="19">
    <location>
        <position position="651"/>
    </location>
</feature>
<feature type="modified residue" description="Phosphoserine" evidence="17 19">
    <location>
        <position position="901"/>
    </location>
</feature>
<feature type="modified residue" description="Phosphoserine" evidence="19">
    <location>
        <position position="939"/>
    </location>
</feature>
<feature type="splice variant" id="VSP_038010" description="In isoform 3." evidence="12">
    <original>M</original>
    <variation>MTDIHSSYTYTGSM</variation>
    <location>
        <position position="1"/>
    </location>
</feature>
<feature type="splice variant" id="VSP_006734" description="In isoform 2 and isoform 3." evidence="11 12 13">
    <location>
        <begin position="811"/>
        <end position="858"/>
    </location>
</feature>
<feature type="sequence conflict" description="In Ref. 1; BAA04970/BAA04969." evidence="14" ref="1">
    <original>M</original>
    <variation>K</variation>
    <location>
        <position position="103"/>
    </location>
</feature>
<feature type="sequence conflict" description="In Ref. 1; BAA04970/BAA04969." evidence="14" ref="1">
    <original>I</original>
    <variation>M</variation>
    <location>
        <position position="331"/>
    </location>
</feature>
<feature type="sequence conflict" description="In Ref. 1; BAA04970/BAA04969." evidence="14" ref="1">
    <original>Y</original>
    <variation>D</variation>
    <location>
        <position position="349"/>
    </location>
</feature>
<feature type="sequence conflict" description="In Ref. 3; AAH79648." evidence="14" ref="3">
    <original>M</original>
    <variation>I</variation>
    <location>
        <position position="558"/>
    </location>
</feature>
<feature type="sequence conflict" description="In Ref. 1; BAA04970/BAA04969." evidence="14" ref="1">
    <original>D</original>
    <variation>Y</variation>
    <location>
        <position position="618"/>
    </location>
</feature>
<feature type="sequence conflict" description="In Ref. 3; AAH79648." evidence="14" ref="3">
    <location>
        <position position="648"/>
    </location>
</feature>
<feature type="sequence conflict" description="In Ref. 1; BAA04970/BAA04969." evidence="14" ref="1">
    <original>D</original>
    <variation>R</variation>
    <location>
        <position position="660"/>
    </location>
</feature>
<feature type="sequence conflict" description="In Ref. 1; BAA04970." evidence="14" ref="1">
    <original>F</original>
    <variation>S</variation>
    <location>
        <position position="817"/>
    </location>
</feature>
<feature type="sequence conflict" description="In Ref. 1; BAA04970/BAA04969." evidence="14" ref="1">
    <original>A</original>
    <variation>S</variation>
    <location>
        <position position="862"/>
    </location>
</feature>
<feature type="sequence conflict" description="In Ref. 2; BAE34726." evidence="14" ref="2">
    <original>P</original>
    <variation>S</variation>
    <location>
        <position position="911"/>
    </location>
</feature>
<feature type="helix" evidence="21">
    <location>
        <begin position="22"/>
        <end position="39"/>
    </location>
</feature>
<feature type="helix" evidence="21">
    <location>
        <begin position="55"/>
        <end position="81"/>
    </location>
</feature>
<feature type="strand" evidence="21">
    <location>
        <begin position="83"/>
        <end position="85"/>
    </location>
</feature>
<feature type="helix" evidence="21">
    <location>
        <begin position="86"/>
        <end position="112"/>
    </location>
</feature>
<feature type="helix" evidence="21">
    <location>
        <begin position="117"/>
        <end position="165"/>
    </location>
</feature>
<feature type="helix" evidence="21">
    <location>
        <begin position="169"/>
        <end position="196"/>
    </location>
</feature>
<feature type="helix" evidence="21">
    <location>
        <begin position="200"/>
        <end position="229"/>
    </location>
</feature>
<feature type="helix" evidence="21">
    <location>
        <begin position="234"/>
        <end position="258"/>
    </location>
</feature>
<feature type="helix" evidence="22">
    <location>
        <begin position="275"/>
        <end position="286"/>
    </location>
</feature>
<feature type="strand" evidence="22">
    <location>
        <begin position="291"/>
        <end position="293"/>
    </location>
</feature>
<feature type="helix" evidence="22">
    <location>
        <begin position="296"/>
        <end position="319"/>
    </location>
</feature>
<feature type="helix" evidence="22">
    <location>
        <begin position="325"/>
        <end position="350"/>
    </location>
</feature>
<feature type="turn" evidence="22">
    <location>
        <begin position="351"/>
        <end position="354"/>
    </location>
</feature>
<feature type="helix" evidence="22">
    <location>
        <begin position="360"/>
        <end position="391"/>
    </location>
</feature>
<feature type="helix" evidence="22">
    <location>
        <begin position="397"/>
        <end position="406"/>
    </location>
</feature>
<feature type="helix" evidence="22">
    <location>
        <begin position="411"/>
        <end position="437"/>
    </location>
</feature>
<feature type="helix" evidence="22">
    <location>
        <begin position="442"/>
        <end position="471"/>
    </location>
</feature>
<feature type="helix" evidence="22">
    <location>
        <begin position="476"/>
        <end position="502"/>
    </location>
</feature>
<feature type="helix" evidence="22">
    <location>
        <begin position="506"/>
        <end position="529"/>
    </location>
</feature>
<feature type="helix" evidence="22">
    <location>
        <begin position="533"/>
        <end position="558"/>
    </location>
</feature>
<feature type="helix" evidence="22">
    <location>
        <begin position="565"/>
        <end position="579"/>
    </location>
</feature>
<feature type="helix" evidence="22">
    <location>
        <begin position="581"/>
        <end position="597"/>
    </location>
</feature>
<feature type="helix" evidence="22">
    <location>
        <begin position="607"/>
        <end position="627"/>
    </location>
</feature>
<feature type="helix" evidence="20">
    <location>
        <begin position="668"/>
        <end position="673"/>
    </location>
</feature>
<feature type="helix" evidence="20">
    <location>
        <begin position="677"/>
        <end position="702"/>
    </location>
</feature>
<feature type="helix" evidence="20">
    <location>
        <begin position="710"/>
        <end position="729"/>
    </location>
</feature>
<feature type="helix" evidence="20">
    <location>
        <begin position="738"/>
        <end position="763"/>
    </location>
</feature>
<feature type="helix" evidence="20">
    <location>
        <begin position="769"/>
        <end position="791"/>
    </location>
</feature>
<feature type="strand" evidence="20">
    <location>
        <begin position="798"/>
        <end position="802"/>
    </location>
</feature>
<feature type="strand" evidence="20">
    <location>
        <begin position="805"/>
        <end position="809"/>
    </location>
</feature>
<feature type="helix" evidence="20">
    <location>
        <begin position="859"/>
        <end position="894"/>
    </location>
</feature>
<evidence type="ECO:0000250" key="1">
    <source>
        <dbReference type="UniProtKB" id="P26232"/>
    </source>
</evidence>
<evidence type="ECO:0000250" key="2">
    <source>
        <dbReference type="UniProtKB" id="P30997"/>
    </source>
</evidence>
<evidence type="ECO:0000256" key="3">
    <source>
        <dbReference type="SAM" id="MobiDB-lite"/>
    </source>
</evidence>
<evidence type="ECO:0000269" key="4">
    <source>
    </source>
</evidence>
<evidence type="ECO:0000269" key="5">
    <source>
    </source>
</evidence>
<evidence type="ECO:0000269" key="6">
    <source>
    </source>
</evidence>
<evidence type="ECO:0000269" key="7">
    <source>
    </source>
</evidence>
<evidence type="ECO:0000269" key="8">
    <source>
    </source>
</evidence>
<evidence type="ECO:0000269" key="9">
    <source>
    </source>
</evidence>
<evidence type="ECO:0000269" key="10">
    <source>
    </source>
</evidence>
<evidence type="ECO:0000303" key="11">
    <source>
    </source>
</evidence>
<evidence type="ECO:0000303" key="12">
    <source>
    </source>
</evidence>
<evidence type="ECO:0000303" key="13">
    <source>
    </source>
</evidence>
<evidence type="ECO:0000305" key="14"/>
<evidence type="ECO:0000305" key="15">
    <source>
    </source>
</evidence>
<evidence type="ECO:0000305" key="16">
    <source>
    </source>
</evidence>
<evidence type="ECO:0007744" key="17">
    <source>
    </source>
</evidence>
<evidence type="ECO:0007744" key="18">
    <source>
    </source>
</evidence>
<evidence type="ECO:0007744" key="19">
    <source>
    </source>
</evidence>
<evidence type="ECO:0007829" key="20">
    <source>
        <dbReference type="PDB" id="4K1O"/>
    </source>
</evidence>
<evidence type="ECO:0007829" key="21">
    <source>
        <dbReference type="PDB" id="4P9T"/>
    </source>
</evidence>
<evidence type="ECO:0007829" key="22">
    <source>
        <dbReference type="PDB" id="5XFL"/>
    </source>
</evidence>
<sequence>MTSATSPIILKWDPKSLEIRTLTVERLLEPLVTQVTTLVNTSNKGPSGKKKGRSKKAHVLAASVEQATQNFLEKGEQIAKESQDLKEELVAAVEDVRKQGETMRIASSEFADDPCSSVKRGTMVRAARALLSAVTRLLILADMADVMRLLSHLKIVEEALEAVKNATNEQDLANRFKEFGKEMVKLNYVAARRQQELKDPHCRDEMAAARGALKKNATMLYTASQAFLRHPDVAATRANRDYVFKQVQEAIAGISSAAQATSPTDEAKGHTGIGELAAALNEFDNKIILDPMTFSEARFRPSLEERLESIISGAALMADSSCTRDDRRERIVAECNAVRQALQDLLSEYMNNTGRKEKGDPLNIAIDKMTKKTRDLRRQLRKAVMDHISDSFLETNVPLLVLIEAAKSGNEKEVKEYAQVFREHANKLVEVANLACSISNNEEGVKLVRMAATQIDSLCPQVINAALTLAARPQSKVAQDNMDVFKDQWEKQVRVLTEAVDDITSVDDFLSVSENHILEDVNKCVIALQEGDVDTLDRTAGAIRGRAARVIHIINAEMENYEAGVYTEKVLEATKLLSETVMPRFAEQVEVAIEALSANVPQPFEENEFIDASRLVYDGVRDIRKAVLMIRTPEELEDDSDFEQEDYDVRSRTSVQTEDDQLIAGQSARAIMAQLPQEEKAKIAEQVEIFHQEKSKLDAEVAKWDDSGNDIIVLAKQMCMIMMEMTDFTRGKGPLKNTSDVINAAKKIAEAGSRMDKLARAVADQCPDSACKQDLLAYLQRIALYCHQLNICSKVKAEVQNLGGELIVSGTGVQSTFTTFYEVDCDVIDGGRASQLSTHLPTCAEGAPIGSGSSDSSMLDSATSLIQAAKNLMNAVVLTVKASYVASTKYQKVYGTAAVNSPVVSWKMKAPEKKPLVKREKPEEFQTRVRRGSQKKHISPVQALSEFKAMDSF</sequence>
<protein>
    <recommendedName>
        <fullName>Catenin alpha-2</fullName>
    </recommendedName>
    <alternativeName>
        <fullName>Alpha N-catenin</fullName>
    </alternativeName>
</protein>
<name>CTNA2_MOUSE</name>
<proteinExistence type="evidence at protein level"/>